<comment type="function">
    <text evidence="4 5 6">Suppresses the insulin receptor and EGFR-transduced MAPK signaling pathway, but does not inhibit MAPK activation by a constitutively active mutant Ras (PubMed:12027893). Probably impairs the formation of GTP-Ras (PubMed:12027893). Inhibits Ras-independent, but not Ras-dependent, activation of RAF1 (PubMed:12717443). Represses integrin-mediated cell spreading via inhibition of TESK1-mediated phosphorylation of cofilin (PubMed:15584898).</text>
</comment>
<comment type="subunit">
    <text evidence="1 4 5 6">Interacts (via C-terminus) with TESK1 (via both C- and N-termini); the interaction inhibits TESK1 kinase activity (PubMed:12027893, PubMed:15584898). Interacts with RAF1 (PubMed:12717443). Interacts with CAV1 (via C-terminus) (By similarity).</text>
</comment>
<comment type="interaction">
    <interactant intactId="EBI-354861">
        <id>Q9C004</id>
    </interactant>
    <interactant intactId="EBI-12006944">
        <id>O43184-4</id>
        <label>ADAM12</label>
    </interactant>
    <organismsDiffer>false</organismsDiffer>
    <experiments>3</experiments>
</comment>
<comment type="interaction">
    <interactant intactId="EBI-354861">
        <id>Q9C004</id>
    </interactant>
    <interactant intactId="EBI-11954292">
        <id>Q86V38</id>
        <label>ATN1</label>
    </interactant>
    <organismsDiffer>false</organismsDiffer>
    <experiments>3</experiments>
</comment>
<comment type="interaction">
    <interactant intactId="EBI-354861">
        <id>Q9C004</id>
    </interactant>
    <interactant intactId="EBI-718729">
        <id>P55212</id>
        <label>CASP6</label>
    </interactant>
    <organismsDiffer>false</organismsDiffer>
    <experiments>3</experiments>
</comment>
<comment type="interaction">
    <interactant intactId="EBI-354861">
        <id>Q9C004</id>
    </interactant>
    <interactant intactId="EBI-518228">
        <id>P22681</id>
        <label>CBL</label>
    </interactant>
    <organismsDiffer>false</organismsDiffer>
    <experiments>9</experiments>
</comment>
<comment type="interaction">
    <interactant intactId="EBI-354861">
        <id>Q9C004</id>
    </interactant>
    <interactant intactId="EBI-6624398">
        <id>P06307</id>
        <label>CCK</label>
    </interactant>
    <organismsDiffer>false</organismsDiffer>
    <experiments>3</experiments>
</comment>
<comment type="interaction">
    <interactant intactId="EBI-354861">
        <id>Q9C004</id>
    </interactant>
    <interactant intactId="EBI-25837549">
        <id>P28329-3</id>
        <label>CHAT</label>
    </interactant>
    <organismsDiffer>false</organismsDiffer>
    <experiments>3</experiments>
</comment>
<comment type="interaction">
    <interactant intactId="EBI-354861">
        <id>Q9C004</id>
    </interactant>
    <interactant intactId="EBI-747133">
        <id>P27658</id>
        <label>COL8A1</label>
    </interactant>
    <organismsDiffer>false</organismsDiffer>
    <experiments>3</experiments>
</comment>
<comment type="interaction">
    <interactant intactId="EBI-354861">
        <id>Q9C004</id>
    </interactant>
    <interactant intactId="EBI-745535">
        <id>Q8NI60</id>
        <label>COQ8A</label>
    </interactant>
    <organismsDiffer>false</organismsDiffer>
    <experiments>3</experiments>
</comment>
<comment type="interaction">
    <interactant intactId="EBI-354861">
        <id>Q9C004</id>
    </interactant>
    <interactant intactId="EBI-10192698">
        <id>Q02930-3</id>
        <label>CREB5</label>
    </interactant>
    <organismsDiffer>false</organismsDiffer>
    <experiments>3</experiments>
</comment>
<comment type="interaction">
    <interactant intactId="EBI-354861">
        <id>Q9C004</id>
    </interactant>
    <interactant intactId="EBI-6875961">
        <id>P02489</id>
        <label>CRYAA</label>
    </interactant>
    <organismsDiffer>false</organismsDiffer>
    <experiments>3</experiments>
</comment>
<comment type="interaction">
    <interactant intactId="EBI-354861">
        <id>Q9C004</id>
    </interactant>
    <interactant intactId="EBI-2115097">
        <id>P07339</id>
        <label>CTSD</label>
    </interactant>
    <organismsDiffer>false</organismsDiffer>
    <experiments>3</experiments>
</comment>
<comment type="interaction">
    <interactant intactId="EBI-354861">
        <id>Q9C004</id>
    </interactant>
    <interactant intactId="EBI-10976677">
        <id>G5E9A7</id>
        <label>DMWD</label>
    </interactant>
    <organismsDiffer>false</organismsDiffer>
    <experiments>3</experiments>
</comment>
<comment type="interaction">
    <interactant intactId="EBI-354861">
        <id>Q9C004</id>
    </interactant>
    <interactant intactId="EBI-743414">
        <id>O95967</id>
        <label>EFEMP2</label>
    </interactant>
    <organismsDiffer>false</organismsDiffer>
    <experiments>3</experiments>
</comment>
<comment type="interaction">
    <interactant intactId="EBI-354861">
        <id>Q9C004</id>
    </interactant>
    <interactant intactId="EBI-348399">
        <id>P22607</id>
        <label>FGFR3</label>
    </interactant>
    <organismsDiffer>false</organismsDiffer>
    <experiments>3</experiments>
</comment>
<comment type="interaction">
    <interactant intactId="EBI-354861">
        <id>Q9C004</id>
    </interactant>
    <interactant intactId="EBI-701903">
        <id>Q14192</id>
        <label>FHL2</label>
    </interactant>
    <organismsDiffer>false</organismsDiffer>
    <experiments>3</experiments>
</comment>
<comment type="interaction">
    <interactant intactId="EBI-354861">
        <id>Q9C004</id>
    </interactant>
    <interactant intactId="EBI-747754">
        <id>P28799</id>
        <label>GRN</label>
    </interactant>
    <organismsDiffer>false</organismsDiffer>
    <experiments>3</experiments>
</comment>
<comment type="interaction">
    <interactant intactId="EBI-354861">
        <id>Q9C004</id>
    </interactant>
    <interactant intactId="EBI-351506">
        <id>P06396</id>
        <label>GSN</label>
    </interactant>
    <organismsDiffer>false</organismsDiffer>
    <experiments>3</experiments>
</comment>
<comment type="interaction">
    <interactant intactId="EBI-354861">
        <id>Q9C004</id>
    </interactant>
    <interactant intactId="EBI-740785">
        <id>P49639</id>
        <label>HOXA1</label>
    </interactant>
    <organismsDiffer>false</organismsDiffer>
    <experiments>3</experiments>
</comment>
<comment type="interaction">
    <interactant intactId="EBI-354861">
        <id>Q9C004</id>
    </interactant>
    <interactant intactId="EBI-352682">
        <id>P04792</id>
        <label>HSPB1</label>
    </interactant>
    <organismsDiffer>false</organismsDiffer>
    <experiments>3</experiments>
</comment>
<comment type="interaction">
    <interactant intactId="EBI-354861">
        <id>Q9C004</id>
    </interactant>
    <interactant intactId="EBI-10975473">
        <id>O60333-2</id>
        <label>KIF1B</label>
    </interactant>
    <organismsDiffer>false</organismsDiffer>
    <experiments>3</experiments>
</comment>
<comment type="interaction">
    <interactant intactId="EBI-354861">
        <id>Q9C004</id>
    </interactant>
    <interactant intactId="EBI-6426443">
        <id>Q2WGJ6</id>
        <label>KLHL38</label>
    </interactant>
    <organismsDiffer>false</organismsDiffer>
    <experiments>3</experiments>
</comment>
<comment type="interaction">
    <interactant intactId="EBI-354861">
        <id>Q9C004</id>
    </interactant>
    <interactant intactId="EBI-2432309">
        <id>Q92876</id>
        <label>KLK6</label>
    </interactant>
    <organismsDiffer>false</organismsDiffer>
    <experiments>3</experiments>
</comment>
<comment type="interaction">
    <interactant intactId="EBI-354861">
        <id>Q9C004</id>
    </interactant>
    <interactant intactId="EBI-11993296">
        <id>Q6L8G4</id>
        <label>KRTAP5-11</label>
    </interactant>
    <organismsDiffer>false</organismsDiffer>
    <experiments>3</experiments>
</comment>
<comment type="interaction">
    <interactant intactId="EBI-354861">
        <id>Q9C004</id>
    </interactant>
    <interactant intactId="EBI-21591415">
        <id>P13473-2</id>
        <label>LAMP2</label>
    </interactant>
    <organismsDiffer>false</organismsDiffer>
    <experiments>3</experiments>
</comment>
<comment type="interaction">
    <interactant intactId="EBI-354861">
        <id>Q9C004</id>
    </interactant>
    <interactant intactId="EBI-591778">
        <id>P61970</id>
        <label>NUTF2</label>
    </interactant>
    <organismsDiffer>false</organismsDiffer>
    <experiments>3</experiments>
</comment>
<comment type="interaction">
    <interactant intactId="EBI-354861">
        <id>Q9C004</id>
    </interactant>
    <interactant intactId="EBI-740446">
        <id>P32242</id>
        <label>OTX1</label>
    </interactant>
    <organismsDiffer>false</organismsDiffer>
    <experiments>3</experiments>
</comment>
<comment type="interaction">
    <interactant intactId="EBI-354861">
        <id>Q9C004</id>
    </interactant>
    <interactant intactId="EBI-947090">
        <id>P78356</id>
        <label>PIP4K2B</label>
    </interactant>
    <organismsDiffer>false</organismsDiffer>
    <experiments>2</experiments>
</comment>
<comment type="interaction">
    <interactant intactId="EBI-354861">
        <id>Q9C004</id>
    </interactant>
    <interactant intactId="EBI-50433196">
        <id>A0A6Q8PF08</id>
        <label>PMP22</label>
    </interactant>
    <organismsDiffer>false</organismsDiffer>
    <experiments>3</experiments>
</comment>
<comment type="interaction">
    <interactant intactId="EBI-354861">
        <id>Q9C004</id>
    </interactant>
    <interactant intactId="EBI-17236143">
        <id>Q12837</id>
        <label>POU4F2</label>
    </interactant>
    <organismsDiffer>false</organismsDiffer>
    <experiments>3</experiments>
</comment>
<comment type="interaction">
    <interactant intactId="EBI-354861">
        <id>Q9C004</id>
    </interactant>
    <interactant intactId="EBI-21251460">
        <id>O60260-5</id>
        <label>PRKN</label>
    </interactant>
    <organismsDiffer>false</organismsDiffer>
    <experiments>3</experiments>
</comment>
<comment type="interaction">
    <interactant intactId="EBI-354861">
        <id>Q9C004</id>
    </interactant>
    <interactant intactId="EBI-5280197">
        <id>O75400-2</id>
        <label>PRPF40A</label>
    </interactant>
    <organismsDiffer>false</organismsDiffer>
    <experiments>3</experiments>
</comment>
<comment type="interaction">
    <interactant intactId="EBI-354861">
        <id>Q9C004</id>
    </interactant>
    <interactant intactId="EBI-749195">
        <id>P60891</id>
        <label>PRPS1</label>
    </interactant>
    <organismsDiffer>false</organismsDiffer>
    <experiments>3</experiments>
</comment>
<comment type="interaction">
    <interactant intactId="EBI-354861">
        <id>Q9C004</id>
    </interactant>
    <interactant intactId="EBI-286642">
        <id>P62826</id>
        <label>RAN</label>
    </interactant>
    <organismsDiffer>false</organismsDiffer>
    <experiments>3</experiments>
</comment>
<comment type="interaction">
    <interactant intactId="EBI-354861">
        <id>Q9C004</id>
    </interactant>
    <interactant intactId="EBI-396669">
        <id>Q9Y3C5</id>
        <label>RNF11</label>
    </interactant>
    <organismsDiffer>false</organismsDiffer>
    <experiments>3</experiments>
</comment>
<comment type="interaction">
    <interactant intactId="EBI-354861">
        <id>Q9C004</id>
    </interactant>
    <interactant intactId="EBI-5235340">
        <id>Q7Z699</id>
        <label>SPRED1</label>
    </interactant>
    <organismsDiffer>false</organismsDiffer>
    <experiments>3</experiments>
</comment>
<comment type="interaction">
    <interactant intactId="EBI-354861">
        <id>Q9C004</id>
    </interactant>
    <interactant intactId="EBI-1054052">
        <id>P31948</id>
        <label>STIP1</label>
    </interactant>
    <organismsDiffer>false</organismsDiffer>
    <experiments>3</experiments>
</comment>
<comment type="interaction">
    <interactant intactId="EBI-354861">
        <id>Q9C004</id>
    </interactant>
    <interactant intactId="EBI-354852">
        <id>Q15569</id>
        <label>TESK1</label>
    </interactant>
    <organismsDiffer>false</organismsDiffer>
    <experiments>4</experiments>
</comment>
<comment type="interaction">
    <interactant intactId="EBI-354861">
        <id>Q9C004</id>
    </interactant>
    <interactant intactId="EBI-711909">
        <id>P02766</id>
        <label>TTR</label>
    </interactant>
    <organismsDiffer>false</organismsDiffer>
    <experiments>3</experiments>
</comment>
<comment type="interaction">
    <interactant intactId="EBI-354861">
        <id>Q9C004</id>
    </interactant>
    <interactant intactId="EBI-741480">
        <id>Q9UMX0</id>
        <label>UBQLN1</label>
    </interactant>
    <organismsDiffer>false</organismsDiffer>
    <experiments>3</experiments>
</comment>
<comment type="interaction">
    <interactant intactId="EBI-354861">
        <id>Q9C004</id>
    </interactant>
    <interactant intactId="EBI-10191303">
        <id>O95231</id>
        <label>VENTX</label>
    </interactant>
    <organismsDiffer>false</organismsDiffer>
    <experiments>3</experiments>
</comment>
<comment type="interaction">
    <interactant intactId="EBI-354861">
        <id>Q9C004</id>
    </interactant>
    <interactant intactId="EBI-720609">
        <id>O76024</id>
        <label>WFS1</label>
    </interactant>
    <organismsDiffer>false</organismsDiffer>
    <experiments>3</experiments>
</comment>
<comment type="interaction">
    <interactant intactId="EBI-354861">
        <id>Q9C004</id>
    </interactant>
    <interactant intactId="EBI-524753">
        <id>Q8IUH5</id>
        <label>ZDHHC17</label>
    </interactant>
    <organismsDiffer>false</organismsDiffer>
    <experiments>2</experiments>
</comment>
<comment type="subcellular location">
    <subcellularLocation>
        <location evidence="4 6">Cytoplasm</location>
    </subcellularLocation>
    <subcellularLocation>
        <location evidence="9">Cell projection</location>
        <location evidence="9">Ruffle membrane</location>
        <topology evidence="9">Peripheral membrane protein</topology>
        <orientation evidence="9">Cytoplasmic side</orientation>
    </subcellularLocation>
    <text evidence="1 6">Found in the cytoplasm in unstimulated cells but is translocated to the membrane ruffles in cells stimulated with EGF (epidermal growth factor) (By similarity). Colocalizes with TESK1 in vesicular spots in the cytoplasm (PubMed:15584898).</text>
</comment>
<comment type="alternative products">
    <event type="alternative splicing"/>
    <isoform>
        <id>Q9C004-1</id>
        <name>A</name>
        <name>Sprouty-4A</name>
        <sequence type="displayed"/>
    </isoform>
    <isoform>
        <id>Q9C004-2</id>
        <name>C</name>
        <name>Sprouty-4C</name>
        <sequence type="described" ref="VSP_006219 VSP_006220"/>
    </isoform>
</comment>
<comment type="domain">
    <text>The Cys-rich domain is responsible for the localization of the protein to the membrane ruffles.</text>
</comment>
<comment type="disease" evidence="7">
    <disease id="DI-03768">
        <name>Hypogonadotropic hypogonadism 17 with or without anosmia</name>
        <acronym>HH17</acronym>
        <description>A disorder characterized by absent or incomplete sexual maturation by the age of 18 years, in conjunction with low levels of circulating gonadotropins and testosterone and no other abnormalities of the hypothalamic-pituitary axis. In some cases, it is associated with non-reproductive phenotypes, such as anosmia, cleft palate, and sensorineural hearing loss. Anosmia or hyposmia is related to the absence or hypoplasia of the olfactory bulbs and tracts. Hypogonadism is due to deficiency in gonadotropin-releasing hormone and probably results from a failure of embryonic migration of gonadotropin-releasing hormone-synthesizing neurons. In the presence of anosmia, idiopathic hypogonadotropic hypogonadism is referred to as Kallmann syndrome, whereas in the presence of a normal sense of smell, it has been termed normosmic idiopathic hypogonadotropic hypogonadism (nIHH).</description>
        <dbReference type="MIM" id="615266"/>
    </disease>
    <text evidence="7">The disease is caused by variants affecting distinct genetic loci, including the gene represented in this entry. Some patients carrying mutations in SPRY4 also have a heterozygous mutation in another HH-associated gene including DUSP6 and FGFR1 (PubMed:23643382).</text>
</comment>
<comment type="similarity">
    <text evidence="9">Belongs to the sprouty family.</text>
</comment>
<comment type="sequence caution" evidence="9">
    <conflict type="erroneous initiation">
        <sequence resource="EMBL-CDS" id="AAK00652"/>
    </conflict>
</comment>
<reference key="1">
    <citation type="journal article" date="2002" name="Eur. J. Biochem.">
        <title>Human sprouty 4, a new ras antagonist on 5q31, interacts with the dual specificity kinase TESK1.</title>
        <authorList>
            <person name="Leeksma O.C."/>
            <person name="van Achterberg T.A.E."/>
            <person name="Tsumura Y."/>
            <person name="Toshima J."/>
            <person name="Eldering E."/>
            <person name="Kroes W.G.M."/>
            <person name="Mellink C."/>
            <person name="Spaargaren M."/>
            <person name="Mizuno K."/>
            <person name="Pannekoek H."/>
            <person name="de Vries C.J.M."/>
        </authorList>
    </citation>
    <scope>NUCLEOTIDE SEQUENCE [MRNA] (ISOFORMS A AND C)</scope>
    <scope>FUNCTION</scope>
    <scope>SUBCELLULAR LOCATION</scope>
    <scope>INTERACTION WITH TESK1</scope>
    <source>
        <tissue>Umbilical artery</tissue>
    </source>
</reference>
<reference key="2">
    <citation type="journal article" date="2004" name="Am. J. Physiol.">
        <title>Genomic structure and promoter characterization of the human Sprouty4 gene, a novel regulator of lung morphogenesis.</title>
        <authorList>
            <person name="Ding W."/>
            <person name="Bellusci S."/>
            <person name="Shi W."/>
            <person name="Warburton D."/>
        </authorList>
    </citation>
    <scope>NUCLEOTIDE SEQUENCE [GENOMIC DNA]</scope>
</reference>
<reference key="3">
    <citation type="journal article" date="2004" name="Nat. Genet.">
        <title>Complete sequencing and characterization of 21,243 full-length human cDNAs.</title>
        <authorList>
            <person name="Ota T."/>
            <person name="Suzuki Y."/>
            <person name="Nishikawa T."/>
            <person name="Otsuki T."/>
            <person name="Sugiyama T."/>
            <person name="Irie R."/>
            <person name="Wakamatsu A."/>
            <person name="Hayashi K."/>
            <person name="Sato H."/>
            <person name="Nagai K."/>
            <person name="Kimura K."/>
            <person name="Makita H."/>
            <person name="Sekine M."/>
            <person name="Obayashi M."/>
            <person name="Nishi T."/>
            <person name="Shibahara T."/>
            <person name="Tanaka T."/>
            <person name="Ishii S."/>
            <person name="Yamamoto J."/>
            <person name="Saito K."/>
            <person name="Kawai Y."/>
            <person name="Isono Y."/>
            <person name="Nakamura Y."/>
            <person name="Nagahari K."/>
            <person name="Murakami K."/>
            <person name="Yasuda T."/>
            <person name="Iwayanagi T."/>
            <person name="Wagatsuma M."/>
            <person name="Shiratori A."/>
            <person name="Sudo H."/>
            <person name="Hosoiri T."/>
            <person name="Kaku Y."/>
            <person name="Kodaira H."/>
            <person name="Kondo H."/>
            <person name="Sugawara M."/>
            <person name="Takahashi M."/>
            <person name="Kanda K."/>
            <person name="Yokoi T."/>
            <person name="Furuya T."/>
            <person name="Kikkawa E."/>
            <person name="Omura Y."/>
            <person name="Abe K."/>
            <person name="Kamihara K."/>
            <person name="Katsuta N."/>
            <person name="Sato K."/>
            <person name="Tanikawa M."/>
            <person name="Yamazaki M."/>
            <person name="Ninomiya K."/>
            <person name="Ishibashi T."/>
            <person name="Yamashita H."/>
            <person name="Murakawa K."/>
            <person name="Fujimori K."/>
            <person name="Tanai H."/>
            <person name="Kimata M."/>
            <person name="Watanabe M."/>
            <person name="Hiraoka S."/>
            <person name="Chiba Y."/>
            <person name="Ishida S."/>
            <person name="Ono Y."/>
            <person name="Takiguchi S."/>
            <person name="Watanabe S."/>
            <person name="Yosida M."/>
            <person name="Hotuta T."/>
            <person name="Kusano J."/>
            <person name="Kanehori K."/>
            <person name="Takahashi-Fujii A."/>
            <person name="Hara H."/>
            <person name="Tanase T.-O."/>
            <person name="Nomura Y."/>
            <person name="Togiya S."/>
            <person name="Komai F."/>
            <person name="Hara R."/>
            <person name="Takeuchi K."/>
            <person name="Arita M."/>
            <person name="Imose N."/>
            <person name="Musashino K."/>
            <person name="Yuuki H."/>
            <person name="Oshima A."/>
            <person name="Sasaki N."/>
            <person name="Aotsuka S."/>
            <person name="Yoshikawa Y."/>
            <person name="Matsunawa H."/>
            <person name="Ichihara T."/>
            <person name="Shiohata N."/>
            <person name="Sano S."/>
            <person name="Moriya S."/>
            <person name="Momiyama H."/>
            <person name="Satoh N."/>
            <person name="Takami S."/>
            <person name="Terashima Y."/>
            <person name="Suzuki O."/>
            <person name="Nakagawa S."/>
            <person name="Senoh A."/>
            <person name="Mizoguchi H."/>
            <person name="Goto Y."/>
            <person name="Shimizu F."/>
            <person name="Wakebe H."/>
            <person name="Hishigaki H."/>
            <person name="Watanabe T."/>
            <person name="Sugiyama A."/>
            <person name="Takemoto M."/>
            <person name="Kawakami B."/>
            <person name="Yamazaki M."/>
            <person name="Watanabe K."/>
            <person name="Kumagai A."/>
            <person name="Itakura S."/>
            <person name="Fukuzumi Y."/>
            <person name="Fujimori Y."/>
            <person name="Komiyama M."/>
            <person name="Tashiro H."/>
            <person name="Tanigami A."/>
            <person name="Fujiwara T."/>
            <person name="Ono T."/>
            <person name="Yamada K."/>
            <person name="Fujii Y."/>
            <person name="Ozaki K."/>
            <person name="Hirao M."/>
            <person name="Ohmori Y."/>
            <person name="Kawabata A."/>
            <person name="Hikiji T."/>
            <person name="Kobatake N."/>
            <person name="Inagaki H."/>
            <person name="Ikema Y."/>
            <person name="Okamoto S."/>
            <person name="Okitani R."/>
            <person name="Kawakami T."/>
            <person name="Noguchi S."/>
            <person name="Itoh T."/>
            <person name="Shigeta K."/>
            <person name="Senba T."/>
            <person name="Matsumura K."/>
            <person name="Nakajima Y."/>
            <person name="Mizuno T."/>
            <person name="Morinaga M."/>
            <person name="Sasaki M."/>
            <person name="Togashi T."/>
            <person name="Oyama M."/>
            <person name="Hata H."/>
            <person name="Watanabe M."/>
            <person name="Komatsu T."/>
            <person name="Mizushima-Sugano J."/>
            <person name="Satoh T."/>
            <person name="Shirai Y."/>
            <person name="Takahashi Y."/>
            <person name="Nakagawa K."/>
            <person name="Okumura K."/>
            <person name="Nagase T."/>
            <person name="Nomura N."/>
            <person name="Kikuchi H."/>
            <person name="Masuho Y."/>
            <person name="Yamashita R."/>
            <person name="Nakai K."/>
            <person name="Yada T."/>
            <person name="Nakamura Y."/>
            <person name="Ohara O."/>
            <person name="Isogai T."/>
            <person name="Sugano S."/>
        </authorList>
    </citation>
    <scope>NUCLEOTIDE SEQUENCE [LARGE SCALE MRNA] (ISOFORM A)</scope>
    <source>
        <tissue>Brain</tissue>
    </source>
</reference>
<reference key="4">
    <citation type="journal article" date="2004" name="Nature">
        <title>The DNA sequence and comparative analysis of human chromosome 5.</title>
        <authorList>
            <person name="Schmutz J."/>
            <person name="Martin J."/>
            <person name="Terry A."/>
            <person name="Couronne O."/>
            <person name="Grimwood J."/>
            <person name="Lowry S."/>
            <person name="Gordon L.A."/>
            <person name="Scott D."/>
            <person name="Xie G."/>
            <person name="Huang W."/>
            <person name="Hellsten U."/>
            <person name="Tran-Gyamfi M."/>
            <person name="She X."/>
            <person name="Prabhakar S."/>
            <person name="Aerts A."/>
            <person name="Altherr M."/>
            <person name="Bajorek E."/>
            <person name="Black S."/>
            <person name="Branscomb E."/>
            <person name="Caoile C."/>
            <person name="Challacombe J.F."/>
            <person name="Chan Y.M."/>
            <person name="Denys M."/>
            <person name="Detter J.C."/>
            <person name="Escobar J."/>
            <person name="Flowers D."/>
            <person name="Fotopulos D."/>
            <person name="Glavina T."/>
            <person name="Gomez M."/>
            <person name="Gonzales E."/>
            <person name="Goodstein D."/>
            <person name="Grigoriev I."/>
            <person name="Groza M."/>
            <person name="Hammon N."/>
            <person name="Hawkins T."/>
            <person name="Haydu L."/>
            <person name="Israni S."/>
            <person name="Jett J."/>
            <person name="Kadner K."/>
            <person name="Kimball H."/>
            <person name="Kobayashi A."/>
            <person name="Lopez F."/>
            <person name="Lou Y."/>
            <person name="Martinez D."/>
            <person name="Medina C."/>
            <person name="Morgan J."/>
            <person name="Nandkeshwar R."/>
            <person name="Noonan J.P."/>
            <person name="Pitluck S."/>
            <person name="Pollard M."/>
            <person name="Predki P."/>
            <person name="Priest J."/>
            <person name="Ramirez L."/>
            <person name="Retterer J."/>
            <person name="Rodriguez A."/>
            <person name="Rogers S."/>
            <person name="Salamov A."/>
            <person name="Salazar A."/>
            <person name="Thayer N."/>
            <person name="Tice H."/>
            <person name="Tsai M."/>
            <person name="Ustaszewska A."/>
            <person name="Vo N."/>
            <person name="Wheeler J."/>
            <person name="Wu K."/>
            <person name="Yang J."/>
            <person name="Dickson M."/>
            <person name="Cheng J.-F."/>
            <person name="Eichler E.E."/>
            <person name="Olsen A."/>
            <person name="Pennacchio L.A."/>
            <person name="Rokhsar D.S."/>
            <person name="Richardson P."/>
            <person name="Lucas S.M."/>
            <person name="Myers R.M."/>
            <person name="Rubin E.M."/>
        </authorList>
    </citation>
    <scope>NUCLEOTIDE SEQUENCE [LARGE SCALE GENOMIC DNA]</scope>
</reference>
<reference key="5">
    <citation type="journal article" date="2004" name="Genome Res.">
        <title>The status, quality, and expansion of the NIH full-length cDNA project: the Mammalian Gene Collection (MGC).</title>
        <authorList>
            <consortium name="The MGC Project Team"/>
        </authorList>
    </citation>
    <scope>NUCLEOTIDE SEQUENCE [LARGE SCALE MRNA] (ISOFORM A)</scope>
</reference>
<reference key="6">
    <citation type="journal article" date="2003" name="Nat. Cell Biol.">
        <title>Mammalian Sprouty4 suppresses Ras-independent ERK activation by binding to Raf1.</title>
        <authorList>
            <person name="Sasaki A."/>
            <person name="Taketomi T."/>
            <person name="Kato R."/>
            <person name="Saeki K."/>
            <person name="Nonami A."/>
            <person name="Sasaki M."/>
            <person name="Kuriyama M."/>
            <person name="Saito N."/>
            <person name="Shibuya M."/>
            <person name="Yoshimura A."/>
        </authorList>
    </citation>
    <scope>FUNCTION</scope>
    <scope>INTERACTION WITH RAF1</scope>
</reference>
<reference key="7">
    <citation type="journal article" date="2005" name="Biochem. J.">
        <title>Sprouty-4 negatively regulates cell spreading by inhibiting the kinase activity of testicular protein kinase.</title>
        <authorList>
            <person name="Tsumura Y."/>
            <person name="Toshima J."/>
            <person name="Leeksma O.C."/>
            <person name="Ohashi K."/>
            <person name="Mizuno K."/>
        </authorList>
    </citation>
    <scope>FUNCTION</scope>
    <scope>INTERACTION WITH TESK1</scope>
    <scope>SUBCELLULAR LOCATION</scope>
</reference>
<reference key="8">
    <citation type="journal article" date="2008" name="Proc. Natl. Acad. Sci. U.S.A.">
        <title>A quantitative atlas of mitotic phosphorylation.</title>
        <authorList>
            <person name="Dephoure N."/>
            <person name="Zhou C."/>
            <person name="Villen J."/>
            <person name="Beausoleil S.A."/>
            <person name="Bakalarski C.E."/>
            <person name="Elledge S.J."/>
            <person name="Gygi S.P."/>
        </authorList>
    </citation>
    <scope>IDENTIFICATION BY MASS SPECTROMETRY [LARGE SCALE ANALYSIS]</scope>
    <source>
        <tissue>Cervix carcinoma</tissue>
    </source>
</reference>
<reference key="9">
    <citation type="journal article" date="2011" name="Sci. Signal.">
        <title>System-wide temporal characterization of the proteome and phosphoproteome of human embryonic stem cell differentiation.</title>
        <authorList>
            <person name="Rigbolt K.T."/>
            <person name="Prokhorova T.A."/>
            <person name="Akimov V."/>
            <person name="Henningsen J."/>
            <person name="Johansen P.T."/>
            <person name="Kratchmarova I."/>
            <person name="Kassem M."/>
            <person name="Mann M."/>
            <person name="Olsen J.V."/>
            <person name="Blagoev B."/>
        </authorList>
    </citation>
    <scope>PHOSPHORYLATION [LARGE SCALE ANALYSIS] AT SER-125</scope>
    <scope>IDENTIFICATION BY MASS SPECTROMETRY [LARGE SCALE ANALYSIS]</scope>
</reference>
<reference key="10">
    <citation type="journal article" date="2012" name="Mol. Cell. Proteomics">
        <title>Comparative large-scale characterisation of plant vs. mammal proteins reveals similar and idiosyncratic N-alpha acetylation features.</title>
        <authorList>
            <person name="Bienvenut W.V."/>
            <person name="Sumpton D."/>
            <person name="Martinez A."/>
            <person name="Lilla S."/>
            <person name="Espagne C."/>
            <person name="Meinnel T."/>
            <person name="Giglione C."/>
        </authorList>
    </citation>
    <scope>ACETYLATION [LARGE SCALE ANALYSIS] AT MET-1</scope>
    <scope>IDENTIFICATION BY MASS SPECTROMETRY [LARGE SCALE ANALYSIS]</scope>
</reference>
<reference key="11">
    <citation type="journal article" date="2013" name="J. Proteome Res.">
        <title>Toward a comprehensive characterization of a human cancer cell phosphoproteome.</title>
        <authorList>
            <person name="Zhou H."/>
            <person name="Di Palma S."/>
            <person name="Preisinger C."/>
            <person name="Peng M."/>
            <person name="Polat A.N."/>
            <person name="Heck A.J."/>
            <person name="Mohammed S."/>
        </authorList>
    </citation>
    <scope>PHOSPHORYLATION [LARGE SCALE ANALYSIS] AT SER-125</scope>
    <scope>IDENTIFICATION BY MASS SPECTROMETRY [LARGE SCALE ANALYSIS]</scope>
    <source>
        <tissue>Erythroleukemia</tissue>
    </source>
</reference>
<reference key="12">
    <citation type="journal article" date="2013" name="Am. J. Hum. Genet.">
        <title>Mutations in FGF17, IL17RD, DUSP6, SPRY4, and FLRT3 are identified in individuals with congenital hypogonadotropic hypogonadism.</title>
        <authorList>
            <person name="Miraoui H."/>
            <person name="Dwyer A.A."/>
            <person name="Sykiotis G.P."/>
            <person name="Plummer L."/>
            <person name="Chung W."/>
            <person name="Feng B."/>
            <person name="Beenken A."/>
            <person name="Clarke J."/>
            <person name="Pers T.H."/>
            <person name="Dworzynski P."/>
            <person name="Keefe K."/>
            <person name="Niedziela M."/>
            <person name="Raivio T."/>
            <person name="Crowley W.F. Jr."/>
            <person name="Seminara S.B."/>
            <person name="Quinton R."/>
            <person name="Hughes V.A."/>
            <person name="Kumanov P."/>
            <person name="Young J."/>
            <person name="Yialamas M.A."/>
            <person name="Hall J.E."/>
            <person name="Van Vliet G."/>
            <person name="Chanoine J.P."/>
            <person name="Rubenstein J."/>
            <person name="Mohammadi M."/>
            <person name="Tsai P.S."/>
            <person name="Sidis Y."/>
            <person name="Lage K."/>
            <person name="Pitteloud N."/>
        </authorList>
    </citation>
    <scope>VARIANTS HH17 MET-77; ASN-82; ARG-154; TYR-186; TYR-218; MET-258 AND ILE-281</scope>
</reference>
<sequence>MEPPIPQSAPLTPNSVMVQPLLDSRMSHSRLQHPLTILPIDQVKTSHVENDYIDNPSLALTTGPKRTRGGAPELAPTPARCDQDVTHHWISFSGRPSSVSSSSSTSSDQRLLDHMAPPPVADQASPRAVRIQPKVVHCQPLDLKGPAVPPELDKHFLLCEACGKCKCKECASPRTLPSCWVCNQECLCSAQTLVNYGTCMCLVQGIFYHCTNEDDEGSCADHPCSCSRSNCCARWSFMGALSVVLPCLLCYLPATGCVKLAQRGYDRLRRPGCRCKHTNSVICKAASGDAKTSRPDKPF</sequence>
<protein>
    <recommendedName>
        <fullName>Protein sprouty homolog 4</fullName>
        <shortName>Spry-4</shortName>
    </recommendedName>
</protein>
<gene>
    <name type="primary">SPRY4</name>
</gene>
<name>SPY4_HUMAN</name>
<accession>Q9C004</accession>
<accession>A4FVB2</accession>
<accession>A4FVB3</accession>
<accession>Q6QIX2</accession>
<accession>Q9C003</accession>
<proteinExistence type="evidence at protein level"/>
<organism>
    <name type="scientific">Homo sapiens</name>
    <name type="common">Human</name>
    <dbReference type="NCBI Taxonomy" id="9606"/>
    <lineage>
        <taxon>Eukaryota</taxon>
        <taxon>Metazoa</taxon>
        <taxon>Chordata</taxon>
        <taxon>Craniata</taxon>
        <taxon>Vertebrata</taxon>
        <taxon>Euteleostomi</taxon>
        <taxon>Mammalia</taxon>
        <taxon>Eutheria</taxon>
        <taxon>Euarchontoglires</taxon>
        <taxon>Primates</taxon>
        <taxon>Haplorrhini</taxon>
        <taxon>Catarrhini</taxon>
        <taxon>Hominidae</taxon>
        <taxon>Homo</taxon>
    </lineage>
</organism>
<keyword id="KW-0002">3D-structure</keyword>
<keyword id="KW-0007">Acetylation</keyword>
<keyword id="KW-0025">Alternative splicing</keyword>
<keyword id="KW-1003">Cell membrane</keyword>
<keyword id="KW-0966">Cell projection</keyword>
<keyword id="KW-0963">Cytoplasm</keyword>
<keyword id="KW-0217">Developmental protein</keyword>
<keyword id="KW-0225">Disease variant</keyword>
<keyword id="KW-1016">Hypogonadotropic hypogonadism</keyword>
<keyword id="KW-0956">Kallmann syndrome</keyword>
<keyword id="KW-0472">Membrane</keyword>
<keyword id="KW-0597">Phosphoprotein</keyword>
<keyword id="KW-1267">Proteomics identification</keyword>
<keyword id="KW-1185">Reference proteome</keyword>
<feature type="chain" id="PRO_0000076905" description="Protein sprouty homolog 4">
    <location>
        <begin position="1"/>
        <end position="299"/>
    </location>
</feature>
<feature type="domain" description="SPR" evidence="2">
    <location>
        <begin position="166"/>
        <end position="273"/>
    </location>
</feature>
<feature type="region of interest" description="Disordered" evidence="3">
    <location>
        <begin position="55"/>
        <end position="79"/>
    </location>
</feature>
<feature type="region of interest" description="Disordered" evidence="3">
    <location>
        <begin position="92"/>
        <end position="126"/>
    </location>
</feature>
<feature type="region of interest" description="Required for interaction with TESK1. Required for colocalization with TESK1 at vesicular spots in the cytoplasm and inhibition of TESK1 kinase activity, resulting in inhibition of cell spreading" evidence="6">
    <location>
        <begin position="181"/>
        <end position="299"/>
    </location>
</feature>
<feature type="compositionally biased region" description="Low complexity" evidence="3">
    <location>
        <begin position="92"/>
        <end position="107"/>
    </location>
</feature>
<feature type="modified residue" description="N-acetylmethionine" evidence="11">
    <location>
        <position position="1"/>
    </location>
</feature>
<feature type="modified residue" description="Phosphoserine" evidence="10 12">
    <location>
        <position position="125"/>
    </location>
</feature>
<feature type="splice variant" id="VSP_006219" description="In isoform C." evidence="8">
    <original>SSVSSSSSTS</original>
    <variation>CSATCLPPAA</variation>
    <location>
        <begin position="97"/>
        <end position="106"/>
    </location>
</feature>
<feature type="splice variant" id="VSP_006220" description="In isoform C." evidence="8">
    <location>
        <begin position="107"/>
        <end position="299"/>
    </location>
</feature>
<feature type="sequence variant" id="VAR_069929" description="In HH17; phenotype consistent with Kallmann syndrome; dbSNP:rs774674946." evidence="7">
    <original>T</original>
    <variation>M</variation>
    <location>
        <position position="77"/>
    </location>
</feature>
<feature type="sequence variant" id="VAR_069930" description="In HH17; without anosmia; dbSNP:rs568363732." evidence="7">
    <original>D</original>
    <variation>N</variation>
    <location>
        <position position="82"/>
    </location>
</feature>
<feature type="sequence variant" id="VAR_069931" description="In HH17; phenotype consistent with Kallmann syndrome; dbSNP:rs78310959." evidence="7">
    <original>K</original>
    <variation>R</variation>
    <location>
        <position position="154"/>
    </location>
</feature>
<feature type="sequence variant" id="VAR_069932" description="In HH17; phenotype consistent with Kallmann syndrome; dbSNP:rs148983803." evidence="7">
    <original>C</original>
    <variation>Y</variation>
    <location>
        <position position="186"/>
    </location>
</feature>
<feature type="sequence variant" id="VAR_069933" description="In HH17; some patients have a second mutation in another HH-associated gene including DUSP6 and FGFR1; dbSNP:rs139512218." evidence="7">
    <original>S</original>
    <variation>Y</variation>
    <location>
        <position position="218"/>
    </location>
</feature>
<feature type="sequence variant" id="VAR_069934" description="In HH17; without anosmia; dbSNP:rs200364529." evidence="7">
    <original>V</original>
    <variation>M</variation>
    <location>
        <position position="258"/>
    </location>
</feature>
<feature type="sequence variant" id="VAR_069935" description="In HH17; without anosmia; dbSNP:rs142439525." evidence="7">
    <original>V</original>
    <variation>I</variation>
    <location>
        <position position="281"/>
    </location>
</feature>
<feature type="sequence conflict" description="In Ref. 5; AAI25097." evidence="9" ref="5">
    <original>S</original>
    <variation>N</variation>
    <location>
        <position position="102"/>
    </location>
</feature>
<evidence type="ECO:0000250" key="1">
    <source>
        <dbReference type="UniProtKB" id="Q9WTP2"/>
    </source>
</evidence>
<evidence type="ECO:0000255" key="2">
    <source>
        <dbReference type="PROSITE-ProRule" id="PRU00572"/>
    </source>
</evidence>
<evidence type="ECO:0000256" key="3">
    <source>
        <dbReference type="SAM" id="MobiDB-lite"/>
    </source>
</evidence>
<evidence type="ECO:0000269" key="4">
    <source>
    </source>
</evidence>
<evidence type="ECO:0000269" key="5">
    <source>
    </source>
</evidence>
<evidence type="ECO:0000269" key="6">
    <source>
    </source>
</evidence>
<evidence type="ECO:0000269" key="7">
    <source>
    </source>
</evidence>
<evidence type="ECO:0000303" key="8">
    <source>
    </source>
</evidence>
<evidence type="ECO:0000305" key="9"/>
<evidence type="ECO:0007744" key="10">
    <source>
    </source>
</evidence>
<evidence type="ECO:0007744" key="11">
    <source>
    </source>
</evidence>
<evidence type="ECO:0007744" key="12">
    <source>
    </source>
</evidence>
<dbReference type="EMBL" id="AF227516">
    <property type="protein sequence ID" value="AAK00652.1"/>
    <property type="status" value="ALT_INIT"/>
    <property type="molecule type" value="mRNA"/>
</dbReference>
<dbReference type="EMBL" id="AF227517">
    <property type="protein sequence ID" value="AAK00653.1"/>
    <property type="molecule type" value="mRNA"/>
</dbReference>
<dbReference type="EMBL" id="AY538661">
    <property type="protein sequence ID" value="AAS46253.1"/>
    <property type="molecule type" value="Genomic_DNA"/>
</dbReference>
<dbReference type="EMBL" id="AK096464">
    <property type="protein sequence ID" value="BAC04798.1"/>
    <property type="molecule type" value="mRNA"/>
</dbReference>
<dbReference type="EMBL" id="AC091825">
    <property type="status" value="NOT_ANNOTATED_CDS"/>
    <property type="molecule type" value="Genomic_DNA"/>
</dbReference>
<dbReference type="EMBL" id="BC125095">
    <property type="protein sequence ID" value="AAI25096.1"/>
    <property type="molecule type" value="mRNA"/>
</dbReference>
<dbReference type="EMBL" id="BC125096">
    <property type="protein sequence ID" value="AAI25097.1"/>
    <property type="molecule type" value="mRNA"/>
</dbReference>
<dbReference type="CCDS" id="CCDS47296.1">
    <molecule id="Q9C004-1"/>
</dbReference>
<dbReference type="RefSeq" id="NP_001120968.1">
    <molecule id="Q9C004-1"/>
    <property type="nucleotide sequence ID" value="NM_001127496.3"/>
</dbReference>
<dbReference type="RefSeq" id="NP_001280218.1">
    <molecule id="Q9C004-1"/>
    <property type="nucleotide sequence ID" value="NM_001293289.3"/>
</dbReference>
<dbReference type="RefSeq" id="NP_001280219.1">
    <molecule id="Q9C004-1"/>
    <property type="nucleotide sequence ID" value="NM_001293290.3"/>
</dbReference>
<dbReference type="RefSeq" id="NP_112226.2">
    <property type="nucleotide sequence ID" value="NM_030964.3"/>
</dbReference>
<dbReference type="RefSeq" id="XP_011535987.1">
    <property type="nucleotide sequence ID" value="XM_011537685.2"/>
</dbReference>
<dbReference type="RefSeq" id="XP_016865399.1">
    <molecule id="Q9C004-1"/>
    <property type="nucleotide sequence ID" value="XM_017009910.3"/>
</dbReference>
<dbReference type="RefSeq" id="XP_054209562.1">
    <molecule id="Q9C004-1"/>
    <property type="nucleotide sequence ID" value="XM_054353587.1"/>
</dbReference>
<dbReference type="PDB" id="3BUN">
    <property type="method" value="X-ray"/>
    <property type="resolution" value="2.00 A"/>
    <property type="chains" value="A=46-58"/>
</dbReference>
<dbReference type="PDBsum" id="3BUN"/>
<dbReference type="SMR" id="Q9C004"/>
<dbReference type="BioGRID" id="123599">
    <property type="interactions" value="87"/>
</dbReference>
<dbReference type="FunCoup" id="Q9C004">
    <property type="interactions" value="344"/>
</dbReference>
<dbReference type="IntAct" id="Q9C004">
    <property type="interactions" value="63"/>
</dbReference>
<dbReference type="MINT" id="Q9C004"/>
<dbReference type="STRING" id="9606.ENSP00000344967"/>
<dbReference type="GlyGen" id="Q9C004">
    <property type="glycosylation" value="1 site"/>
</dbReference>
<dbReference type="iPTMnet" id="Q9C004"/>
<dbReference type="PhosphoSitePlus" id="Q9C004"/>
<dbReference type="SwissPalm" id="Q9C004"/>
<dbReference type="BioMuta" id="SPRY4"/>
<dbReference type="DMDM" id="14916719"/>
<dbReference type="CPTAC" id="CPTAC-1570"/>
<dbReference type="jPOST" id="Q9C004"/>
<dbReference type="MassIVE" id="Q9C004"/>
<dbReference type="PaxDb" id="9606-ENSP00000344967"/>
<dbReference type="PeptideAtlas" id="Q9C004"/>
<dbReference type="ProteomicsDB" id="79936">
    <molecule id="Q9C004-1"/>
</dbReference>
<dbReference type="ProteomicsDB" id="79937">
    <molecule id="Q9C004-2"/>
</dbReference>
<dbReference type="Pumba" id="Q9C004"/>
<dbReference type="Antibodypedia" id="3761">
    <property type="antibodies" value="289 antibodies from 32 providers"/>
</dbReference>
<dbReference type="DNASU" id="81848"/>
<dbReference type="Ensembl" id="ENST00000434127.3">
    <molecule id="Q9C004-1"/>
    <property type="protein sequence ID" value="ENSP00000399468.2"/>
    <property type="gene ID" value="ENSG00000187678.10"/>
</dbReference>
<dbReference type="GeneID" id="81848"/>
<dbReference type="KEGG" id="hsa:81848"/>
<dbReference type="MANE-Select" id="ENST00000434127.3">
    <property type="protein sequence ID" value="ENSP00000399468.2"/>
    <property type="RefSeq nucleotide sequence ID" value="NM_001127496.3"/>
    <property type="RefSeq protein sequence ID" value="NP_001120968.1"/>
</dbReference>
<dbReference type="UCSC" id="uc003lml.3">
    <molecule id="Q9C004-1"/>
    <property type="organism name" value="human"/>
</dbReference>
<dbReference type="AGR" id="HGNC:15533"/>
<dbReference type="CTD" id="81848"/>
<dbReference type="DisGeNET" id="81848"/>
<dbReference type="GeneCards" id="SPRY4"/>
<dbReference type="GeneReviews" id="SPRY4"/>
<dbReference type="HGNC" id="HGNC:15533">
    <property type="gene designation" value="SPRY4"/>
</dbReference>
<dbReference type="HPA" id="ENSG00000187678">
    <property type="expression patterns" value="Low tissue specificity"/>
</dbReference>
<dbReference type="MalaCards" id="SPRY4"/>
<dbReference type="MIM" id="607984">
    <property type="type" value="gene"/>
</dbReference>
<dbReference type="MIM" id="615266">
    <property type="type" value="phenotype"/>
</dbReference>
<dbReference type="neXtProt" id="NX_Q9C004"/>
<dbReference type="OpenTargets" id="ENSG00000187678"/>
<dbReference type="Orphanet" id="478">
    <property type="disease" value="Kallmann syndrome"/>
</dbReference>
<dbReference type="Orphanet" id="363494">
    <property type="disease" value="Non-seminomatous germ cell tumor of testis"/>
</dbReference>
<dbReference type="Orphanet" id="432">
    <property type="disease" value="Normosmic congenital hypogonadotropic hypogonadism"/>
</dbReference>
<dbReference type="PharmGKB" id="PA37975"/>
<dbReference type="VEuPathDB" id="HostDB:ENSG00000187678"/>
<dbReference type="eggNOG" id="ENOG502QQ4V">
    <property type="taxonomic scope" value="Eukaryota"/>
</dbReference>
<dbReference type="GeneTree" id="ENSGT00950000183055"/>
<dbReference type="HOGENOM" id="CLU_077696_0_0_1"/>
<dbReference type="InParanoid" id="Q9C004"/>
<dbReference type="OMA" id="MCLVQGV"/>
<dbReference type="OrthoDB" id="10038884at2759"/>
<dbReference type="PAN-GO" id="Q9C004">
    <property type="GO annotations" value="5 GO annotations based on evolutionary models"/>
</dbReference>
<dbReference type="PhylomeDB" id="Q9C004"/>
<dbReference type="TreeFam" id="TF325070"/>
<dbReference type="PathwayCommons" id="Q9C004"/>
<dbReference type="SignaLink" id="Q9C004"/>
<dbReference type="SIGNOR" id="Q9C004"/>
<dbReference type="BioGRID-ORCS" id="81848">
    <property type="hits" value="15 hits in 1158 CRISPR screens"/>
</dbReference>
<dbReference type="ChiTaRS" id="SPRY4">
    <property type="organism name" value="human"/>
</dbReference>
<dbReference type="EvolutionaryTrace" id="Q9C004"/>
<dbReference type="GeneWiki" id="SPRY4"/>
<dbReference type="GenomeRNAi" id="81848"/>
<dbReference type="Pharos" id="Q9C004">
    <property type="development level" value="Tbio"/>
</dbReference>
<dbReference type="PRO" id="PR:Q9C004"/>
<dbReference type="Proteomes" id="UP000005640">
    <property type="component" value="Chromosome 5"/>
</dbReference>
<dbReference type="RNAct" id="Q9C004">
    <property type="molecule type" value="protein"/>
</dbReference>
<dbReference type="Bgee" id="ENSG00000187678">
    <property type="expression patterns" value="Expressed in left coronary artery and 143 other cell types or tissues"/>
</dbReference>
<dbReference type="ExpressionAtlas" id="Q9C004">
    <property type="expression patterns" value="baseline and differential"/>
</dbReference>
<dbReference type="GO" id="GO:0005737">
    <property type="term" value="C:cytoplasm"/>
    <property type="evidence" value="ECO:0000314"/>
    <property type="project" value="UniProtKB"/>
</dbReference>
<dbReference type="GO" id="GO:0005829">
    <property type="term" value="C:cytosol"/>
    <property type="evidence" value="ECO:0000318"/>
    <property type="project" value="GO_Central"/>
</dbReference>
<dbReference type="GO" id="GO:0005925">
    <property type="term" value="C:focal adhesion"/>
    <property type="evidence" value="ECO:0007005"/>
    <property type="project" value="UniProtKB"/>
</dbReference>
<dbReference type="GO" id="GO:0032587">
    <property type="term" value="C:ruffle membrane"/>
    <property type="evidence" value="ECO:0007669"/>
    <property type="project" value="UniProtKB-SubCell"/>
</dbReference>
<dbReference type="GO" id="GO:0004860">
    <property type="term" value="F:protein kinase inhibitor activity"/>
    <property type="evidence" value="ECO:0000315"/>
    <property type="project" value="UniProtKB"/>
</dbReference>
<dbReference type="GO" id="GO:0048513">
    <property type="term" value="P:animal organ development"/>
    <property type="evidence" value="ECO:0000318"/>
    <property type="project" value="GO_Central"/>
</dbReference>
<dbReference type="GO" id="GO:1990830">
    <property type="term" value="P:cellular response to leukemia inhibitory factor"/>
    <property type="evidence" value="ECO:0007669"/>
    <property type="project" value="Ensembl"/>
</dbReference>
<dbReference type="GO" id="GO:0070373">
    <property type="term" value="P:negative regulation of ERK1 and ERK2 cascade"/>
    <property type="evidence" value="ECO:0000318"/>
    <property type="project" value="GO_Central"/>
</dbReference>
<dbReference type="GO" id="GO:0040037">
    <property type="term" value="P:negative regulation of fibroblast growth factor receptor signaling pathway"/>
    <property type="evidence" value="ECO:0000318"/>
    <property type="project" value="GO_Central"/>
</dbReference>
<dbReference type="GO" id="GO:0046580">
    <property type="term" value="P:negative regulation of Ras protein signal transduction"/>
    <property type="evidence" value="ECO:0000318"/>
    <property type="project" value="GO_Central"/>
</dbReference>
<dbReference type="GO" id="GO:1900025">
    <property type="term" value="P:negative regulation of substrate adhesion-dependent cell spreading"/>
    <property type="evidence" value="ECO:0000315"/>
    <property type="project" value="UniProtKB"/>
</dbReference>
<dbReference type="IDEAL" id="IID00585"/>
<dbReference type="InterPro" id="IPR007875">
    <property type="entry name" value="Sprouty"/>
</dbReference>
<dbReference type="InterPro" id="IPR051192">
    <property type="entry name" value="Sprouty_domain"/>
</dbReference>
<dbReference type="PANTHER" id="PTHR12365:SF6">
    <property type="entry name" value="PROTEIN SPROUTY HOMOLOG 4"/>
    <property type="match status" value="1"/>
</dbReference>
<dbReference type="PANTHER" id="PTHR12365">
    <property type="entry name" value="SPROUTY"/>
    <property type="match status" value="1"/>
</dbReference>
<dbReference type="Pfam" id="PF05210">
    <property type="entry name" value="Sprouty"/>
    <property type="match status" value="1"/>
</dbReference>
<dbReference type="PROSITE" id="PS51227">
    <property type="entry name" value="SPR"/>
    <property type="match status" value="1"/>
</dbReference>